<accession>C5CE71</accession>
<name>COBS_KOSOT</name>
<feature type="chain" id="PRO_1000212693" description="Adenosylcobinamide-GDP ribazoletransferase">
    <location>
        <begin position="1"/>
        <end position="231"/>
    </location>
</feature>
<feature type="transmembrane region" description="Helical" evidence="1">
    <location>
        <begin position="29"/>
        <end position="49"/>
    </location>
</feature>
<feature type="transmembrane region" description="Helical" evidence="1">
    <location>
        <begin position="53"/>
        <end position="73"/>
    </location>
</feature>
<feature type="transmembrane region" description="Helical" evidence="1">
    <location>
        <begin position="101"/>
        <end position="121"/>
    </location>
</feature>
<feature type="transmembrane region" description="Helical" evidence="1">
    <location>
        <begin position="126"/>
        <end position="146"/>
    </location>
</feature>
<feature type="transmembrane region" description="Helical" evidence="1">
    <location>
        <begin position="167"/>
        <end position="187"/>
    </location>
</feature>
<feature type="transmembrane region" description="Helical" evidence="1">
    <location>
        <begin position="211"/>
        <end position="231"/>
    </location>
</feature>
<dbReference type="EC" id="2.7.8.26" evidence="1"/>
<dbReference type="EMBL" id="CP001634">
    <property type="protein sequence ID" value="ACR79179.1"/>
    <property type="molecule type" value="Genomic_DNA"/>
</dbReference>
<dbReference type="STRING" id="521045.Kole_0456"/>
<dbReference type="KEGG" id="kol:Kole_0456"/>
<dbReference type="eggNOG" id="COG0368">
    <property type="taxonomic scope" value="Bacteria"/>
</dbReference>
<dbReference type="HOGENOM" id="CLU_057426_1_2_0"/>
<dbReference type="OrthoDB" id="9794626at2"/>
<dbReference type="UniPathway" id="UPA00148">
    <property type="reaction ID" value="UER00238"/>
</dbReference>
<dbReference type="Proteomes" id="UP000002382">
    <property type="component" value="Chromosome"/>
</dbReference>
<dbReference type="GO" id="GO:0005886">
    <property type="term" value="C:plasma membrane"/>
    <property type="evidence" value="ECO:0007669"/>
    <property type="project" value="UniProtKB-SubCell"/>
</dbReference>
<dbReference type="GO" id="GO:0051073">
    <property type="term" value="F:adenosylcobinamide-GDP ribazoletransferase activity"/>
    <property type="evidence" value="ECO:0007669"/>
    <property type="project" value="UniProtKB-UniRule"/>
</dbReference>
<dbReference type="GO" id="GO:0008818">
    <property type="term" value="F:cobalamin 5'-phosphate synthase activity"/>
    <property type="evidence" value="ECO:0007669"/>
    <property type="project" value="UniProtKB-UniRule"/>
</dbReference>
<dbReference type="GO" id="GO:0009236">
    <property type="term" value="P:cobalamin biosynthetic process"/>
    <property type="evidence" value="ECO:0007669"/>
    <property type="project" value="UniProtKB-UniRule"/>
</dbReference>
<dbReference type="HAMAP" id="MF_00719">
    <property type="entry name" value="CobS"/>
    <property type="match status" value="1"/>
</dbReference>
<dbReference type="InterPro" id="IPR003805">
    <property type="entry name" value="CobS"/>
</dbReference>
<dbReference type="PANTHER" id="PTHR34148">
    <property type="entry name" value="ADENOSYLCOBINAMIDE-GDP RIBAZOLETRANSFERASE"/>
    <property type="match status" value="1"/>
</dbReference>
<dbReference type="PANTHER" id="PTHR34148:SF1">
    <property type="entry name" value="ADENOSYLCOBINAMIDE-GDP RIBAZOLETRANSFERASE"/>
    <property type="match status" value="1"/>
</dbReference>
<dbReference type="Pfam" id="PF02654">
    <property type="entry name" value="CobS"/>
    <property type="match status" value="1"/>
</dbReference>
<reference key="1">
    <citation type="submission" date="2009-06" db="EMBL/GenBank/DDBJ databases">
        <title>Complete sequence of Thermotogales bacterium TBF 19.5.1.</title>
        <authorList>
            <consortium name="US DOE Joint Genome Institute"/>
            <person name="Lucas S."/>
            <person name="Copeland A."/>
            <person name="Lapidus A."/>
            <person name="Glavina del Rio T."/>
            <person name="Tice H."/>
            <person name="Bruce D."/>
            <person name="Goodwin L."/>
            <person name="Pitluck S."/>
            <person name="Chertkov O."/>
            <person name="Brettin T."/>
            <person name="Detter J.C."/>
            <person name="Han C."/>
            <person name="Schmutz J."/>
            <person name="Larimer F."/>
            <person name="Land M."/>
            <person name="Hauser L."/>
            <person name="Kyrpides N."/>
            <person name="Ovchinnikova G."/>
            <person name="Noll K."/>
        </authorList>
    </citation>
    <scope>NUCLEOTIDE SEQUENCE [LARGE SCALE GENOMIC DNA]</scope>
    <source>
        <strain>ATCC BAA-1733 / DSM 21960 / TBF 19.5.1</strain>
    </source>
</reference>
<protein>
    <recommendedName>
        <fullName evidence="1">Adenosylcobinamide-GDP ribazoletransferase</fullName>
        <ecNumber evidence="1">2.7.8.26</ecNumber>
    </recommendedName>
    <alternativeName>
        <fullName evidence="1">Cobalamin synthase</fullName>
    </alternativeName>
    <alternativeName>
        <fullName evidence="1">Cobalamin-5'-phosphate synthase</fullName>
    </alternativeName>
</protein>
<sequence length="231" mass="26248">MWNDMKLAIAFLSRVPVPLKQNKGNLKKICAYFTFVGYLAGVFYFSMKLISENFLWTLLSVALGFYLFDLFHFDGLLDTLDGFFYQGTKERRFEIMSKGDIGPFAFFYAALYIVAYLYAFLHVDPIDLIYVAVLGRFSMNILLHFGKPAKNTGLGKLLHPYEKKHTLISLVFTIPLVYFPLNYIISLSIALLLGSSMHFITNRKIEGYTGDVLGATCMFSQLSIMVALSLI</sequence>
<evidence type="ECO:0000255" key="1">
    <source>
        <dbReference type="HAMAP-Rule" id="MF_00719"/>
    </source>
</evidence>
<gene>
    <name evidence="1" type="primary">cobS</name>
    <name type="ordered locus">Kole_0456</name>
</gene>
<keyword id="KW-0997">Cell inner membrane</keyword>
<keyword id="KW-1003">Cell membrane</keyword>
<keyword id="KW-0169">Cobalamin biosynthesis</keyword>
<keyword id="KW-0460">Magnesium</keyword>
<keyword id="KW-0472">Membrane</keyword>
<keyword id="KW-1185">Reference proteome</keyword>
<keyword id="KW-0808">Transferase</keyword>
<keyword id="KW-0812">Transmembrane</keyword>
<keyword id="KW-1133">Transmembrane helix</keyword>
<comment type="function">
    <text evidence="1">Joins adenosylcobinamide-GDP and alpha-ribazole to generate adenosylcobalamin (Ado-cobalamin). Also synthesizes adenosylcobalamin 5'-phosphate from adenosylcobinamide-GDP and alpha-ribazole 5'-phosphate.</text>
</comment>
<comment type="catalytic activity">
    <reaction evidence="1">
        <text>alpha-ribazole + adenosylcob(III)inamide-GDP = adenosylcob(III)alamin + GMP + H(+)</text>
        <dbReference type="Rhea" id="RHEA:16049"/>
        <dbReference type="ChEBI" id="CHEBI:10329"/>
        <dbReference type="ChEBI" id="CHEBI:15378"/>
        <dbReference type="ChEBI" id="CHEBI:18408"/>
        <dbReference type="ChEBI" id="CHEBI:58115"/>
        <dbReference type="ChEBI" id="CHEBI:60487"/>
        <dbReference type="EC" id="2.7.8.26"/>
    </reaction>
</comment>
<comment type="catalytic activity">
    <reaction evidence="1">
        <text>alpha-ribazole 5'-phosphate + adenosylcob(III)inamide-GDP = adenosylcob(III)alamin 5'-phosphate + GMP + H(+)</text>
        <dbReference type="Rhea" id="RHEA:23560"/>
        <dbReference type="ChEBI" id="CHEBI:15378"/>
        <dbReference type="ChEBI" id="CHEBI:57918"/>
        <dbReference type="ChEBI" id="CHEBI:58115"/>
        <dbReference type="ChEBI" id="CHEBI:60487"/>
        <dbReference type="ChEBI" id="CHEBI:60493"/>
        <dbReference type="EC" id="2.7.8.26"/>
    </reaction>
</comment>
<comment type="cofactor">
    <cofactor evidence="1">
        <name>Mg(2+)</name>
        <dbReference type="ChEBI" id="CHEBI:18420"/>
    </cofactor>
</comment>
<comment type="pathway">
    <text evidence="1">Cofactor biosynthesis; adenosylcobalamin biosynthesis; adenosylcobalamin from cob(II)yrinate a,c-diamide: step 7/7.</text>
</comment>
<comment type="subcellular location">
    <subcellularLocation>
        <location evidence="1">Cell inner membrane</location>
        <topology evidence="1">Multi-pass membrane protein</topology>
    </subcellularLocation>
</comment>
<comment type="similarity">
    <text evidence="1">Belongs to the CobS family.</text>
</comment>
<proteinExistence type="inferred from homology"/>
<organism>
    <name type="scientific">Kosmotoga olearia (strain ATCC BAA-1733 / DSM 21960 / TBF 19.5.1)</name>
    <dbReference type="NCBI Taxonomy" id="521045"/>
    <lineage>
        <taxon>Bacteria</taxon>
        <taxon>Thermotogati</taxon>
        <taxon>Thermotogota</taxon>
        <taxon>Thermotogae</taxon>
        <taxon>Kosmotogales</taxon>
        <taxon>Kosmotogaceae</taxon>
        <taxon>Kosmotoga</taxon>
    </lineage>
</organism>